<keyword id="KW-0131">Cell cycle</keyword>
<keyword id="KW-0132">Cell division</keyword>
<keyword id="KW-0574">Periplasm</keyword>
<keyword id="KW-1185">Reference proteome</keyword>
<keyword id="KW-0732">Signal</keyword>
<evidence type="ECO:0000255" key="1">
    <source>
        <dbReference type="HAMAP-Rule" id="MF_00671"/>
    </source>
</evidence>
<organism>
    <name type="scientific">Shewanella oneidensis (strain ATCC 700550 / JCM 31522 / CIP 106686 / LMG 19005 / NCIMB 14063 / MR-1)</name>
    <dbReference type="NCBI Taxonomy" id="211586"/>
    <lineage>
        <taxon>Bacteria</taxon>
        <taxon>Pseudomonadati</taxon>
        <taxon>Pseudomonadota</taxon>
        <taxon>Gammaproteobacteria</taxon>
        <taxon>Alteromonadales</taxon>
        <taxon>Shewanellaceae</taxon>
        <taxon>Shewanella</taxon>
    </lineage>
</organism>
<comment type="function">
    <text evidence="1">Part of the Tol-Pal system, which plays a role in outer membrane invagination during cell division and is important for maintaining outer membrane integrity.</text>
</comment>
<comment type="subunit">
    <text evidence="1">The Tol-Pal system is composed of five core proteins: the inner membrane proteins TolA, TolQ and TolR, the periplasmic protein TolB and the outer membrane protein Pal. They form a network linking the inner and outer membranes and the peptidoglycan layer.</text>
</comment>
<comment type="subcellular location">
    <subcellularLocation>
        <location evidence="1">Periplasm</location>
    </subcellularLocation>
</comment>
<comment type="similarity">
    <text evidence="1">Belongs to the TolB family.</text>
</comment>
<dbReference type="EMBL" id="AE014299">
    <property type="protein sequence ID" value="AAN55776.1"/>
    <property type="molecule type" value="Genomic_DNA"/>
</dbReference>
<dbReference type="RefSeq" id="NP_718332.1">
    <property type="nucleotide sequence ID" value="NC_004347.2"/>
</dbReference>
<dbReference type="RefSeq" id="WP_011072687.1">
    <property type="nucleotide sequence ID" value="NC_004347.2"/>
</dbReference>
<dbReference type="SMR" id="Q8EDJ8"/>
<dbReference type="STRING" id="211586.SO_2748"/>
<dbReference type="PaxDb" id="211586-SO_2748"/>
<dbReference type="KEGG" id="son:SO_2748"/>
<dbReference type="PATRIC" id="fig|211586.12.peg.2647"/>
<dbReference type="eggNOG" id="COG0823">
    <property type="taxonomic scope" value="Bacteria"/>
</dbReference>
<dbReference type="HOGENOM" id="CLU_047123_0_0_6"/>
<dbReference type="OrthoDB" id="9802240at2"/>
<dbReference type="PhylomeDB" id="Q8EDJ8"/>
<dbReference type="BioCyc" id="SONE211586:G1GMP-2535-MONOMER"/>
<dbReference type="Proteomes" id="UP000008186">
    <property type="component" value="Chromosome"/>
</dbReference>
<dbReference type="GO" id="GO:0042597">
    <property type="term" value="C:periplasmic space"/>
    <property type="evidence" value="ECO:0007669"/>
    <property type="project" value="UniProtKB-SubCell"/>
</dbReference>
<dbReference type="GO" id="GO:0051301">
    <property type="term" value="P:cell division"/>
    <property type="evidence" value="ECO:0007669"/>
    <property type="project" value="UniProtKB-UniRule"/>
</dbReference>
<dbReference type="GO" id="GO:0017038">
    <property type="term" value="P:protein import"/>
    <property type="evidence" value="ECO:0007669"/>
    <property type="project" value="InterPro"/>
</dbReference>
<dbReference type="Gene3D" id="2.120.10.30">
    <property type="entry name" value="TolB, C-terminal domain"/>
    <property type="match status" value="1"/>
</dbReference>
<dbReference type="Gene3D" id="3.40.50.10070">
    <property type="entry name" value="TolB, N-terminal domain"/>
    <property type="match status" value="1"/>
</dbReference>
<dbReference type="HAMAP" id="MF_00671">
    <property type="entry name" value="TolB"/>
    <property type="match status" value="1"/>
</dbReference>
<dbReference type="InterPro" id="IPR011042">
    <property type="entry name" value="6-blade_b-propeller_TolB-like"/>
</dbReference>
<dbReference type="InterPro" id="IPR011659">
    <property type="entry name" value="PD40"/>
</dbReference>
<dbReference type="InterPro" id="IPR014167">
    <property type="entry name" value="Tol-Pal_TolB"/>
</dbReference>
<dbReference type="InterPro" id="IPR007195">
    <property type="entry name" value="TolB_N"/>
</dbReference>
<dbReference type="NCBIfam" id="TIGR02800">
    <property type="entry name" value="propeller_TolB"/>
    <property type="match status" value="1"/>
</dbReference>
<dbReference type="PANTHER" id="PTHR36842:SF1">
    <property type="entry name" value="PROTEIN TOLB"/>
    <property type="match status" value="1"/>
</dbReference>
<dbReference type="PANTHER" id="PTHR36842">
    <property type="entry name" value="PROTEIN TOLB HOMOLOG"/>
    <property type="match status" value="1"/>
</dbReference>
<dbReference type="Pfam" id="PF07676">
    <property type="entry name" value="PD40"/>
    <property type="match status" value="4"/>
</dbReference>
<dbReference type="Pfam" id="PF04052">
    <property type="entry name" value="TolB_N"/>
    <property type="match status" value="1"/>
</dbReference>
<dbReference type="SUPFAM" id="SSF52964">
    <property type="entry name" value="TolB, N-terminal domain"/>
    <property type="match status" value="1"/>
</dbReference>
<dbReference type="SUPFAM" id="SSF69304">
    <property type="entry name" value="Tricorn protease N-terminal domain"/>
    <property type="match status" value="1"/>
</dbReference>
<protein>
    <recommendedName>
        <fullName evidence="1">Tol-Pal system protein TolB</fullName>
    </recommendedName>
</protein>
<accession>Q8EDJ8</accession>
<proteinExistence type="inferred from homology"/>
<gene>
    <name evidence="1" type="primary">tolB</name>
    <name type="ordered locus">SO_2748</name>
</gene>
<sequence>MKILAKWLTLVVLLCTTPAKAALDIVITEGVDAARPIAVMPFQWQGAGAPPQAIADVVMSDLVRSGTFKPLDELGLPQRGIGALAQFDANAWTNVSAEALVVGSVKPYGADQFLVSFELIDLVKAQNQALKGSANPTELLMDSRQTVISATQFRQYGHRISDIVYEKLTGIRGAFLTRISYVVVNHSQKAAYSLMIADYDGYNEQMLLRSPEPLMSPAWSPDGRRLAYVSFENKKAEIFVQDLYTQVRTKVSSFSGINGAPSFSPDGKSLAVTLSKDGQPEIYVIDIATKAIKRITNHYSIDTEPSWYPDGKSLLFTSERGGRPQLYRVDLNSGKVTRETFEGEWNLGGSITPDGRSMIFVNRTNGKFNIARMDLSTRFMQVLTSTRLDESPSVAPNGTMVIYGTTHQGKQVLAAVSTDGRFKARLPAGQGEVKSPSWSPFL</sequence>
<feature type="signal peptide" evidence="1">
    <location>
        <begin position="1"/>
        <end position="21"/>
    </location>
</feature>
<feature type="chain" id="PRO_0000034686" description="Tol-Pal system protein TolB" evidence="1">
    <location>
        <begin position="22"/>
        <end position="442"/>
    </location>
</feature>
<reference key="1">
    <citation type="journal article" date="2002" name="Nat. Biotechnol.">
        <title>Genome sequence of the dissimilatory metal ion-reducing bacterium Shewanella oneidensis.</title>
        <authorList>
            <person name="Heidelberg J.F."/>
            <person name="Paulsen I.T."/>
            <person name="Nelson K.E."/>
            <person name="Gaidos E.J."/>
            <person name="Nelson W.C."/>
            <person name="Read T.D."/>
            <person name="Eisen J.A."/>
            <person name="Seshadri R."/>
            <person name="Ward N.L."/>
            <person name="Methe B.A."/>
            <person name="Clayton R.A."/>
            <person name="Meyer T."/>
            <person name="Tsapin A."/>
            <person name="Scott J."/>
            <person name="Beanan M.J."/>
            <person name="Brinkac L.M."/>
            <person name="Daugherty S.C."/>
            <person name="DeBoy R.T."/>
            <person name="Dodson R.J."/>
            <person name="Durkin A.S."/>
            <person name="Haft D.H."/>
            <person name="Kolonay J.F."/>
            <person name="Madupu R."/>
            <person name="Peterson J.D."/>
            <person name="Umayam L.A."/>
            <person name="White O."/>
            <person name="Wolf A.M."/>
            <person name="Vamathevan J.J."/>
            <person name="Weidman J.F."/>
            <person name="Impraim M."/>
            <person name="Lee K."/>
            <person name="Berry K.J."/>
            <person name="Lee C."/>
            <person name="Mueller J."/>
            <person name="Khouri H.M."/>
            <person name="Gill J."/>
            <person name="Utterback T.R."/>
            <person name="McDonald L.A."/>
            <person name="Feldblyum T.V."/>
            <person name="Smith H.O."/>
            <person name="Venter J.C."/>
            <person name="Nealson K.H."/>
            <person name="Fraser C.M."/>
        </authorList>
    </citation>
    <scope>NUCLEOTIDE SEQUENCE [LARGE SCALE GENOMIC DNA]</scope>
    <source>
        <strain>ATCC 700550 / JCM 31522 / CIP 106686 / LMG 19005 / NCIMB 14063 / MR-1</strain>
    </source>
</reference>
<name>TOLB_SHEON</name>